<gene>
    <name evidence="1" type="primary">trpA</name>
    <name type="ordered locus">DehaBAV1_1278</name>
</gene>
<dbReference type="EC" id="4.2.1.20" evidence="1"/>
<dbReference type="EMBL" id="CP000688">
    <property type="protein sequence ID" value="ABQ17857.1"/>
    <property type="molecule type" value="Genomic_DNA"/>
</dbReference>
<dbReference type="SMR" id="A5FPL3"/>
<dbReference type="KEGG" id="deb:DehaBAV1_1278"/>
<dbReference type="PATRIC" id="fig|216389.18.peg.1347"/>
<dbReference type="HOGENOM" id="CLU_016734_0_2_0"/>
<dbReference type="UniPathway" id="UPA00035">
    <property type="reaction ID" value="UER00044"/>
</dbReference>
<dbReference type="GO" id="GO:0005829">
    <property type="term" value="C:cytosol"/>
    <property type="evidence" value="ECO:0007669"/>
    <property type="project" value="TreeGrafter"/>
</dbReference>
<dbReference type="GO" id="GO:0004834">
    <property type="term" value="F:tryptophan synthase activity"/>
    <property type="evidence" value="ECO:0007669"/>
    <property type="project" value="UniProtKB-UniRule"/>
</dbReference>
<dbReference type="CDD" id="cd04724">
    <property type="entry name" value="Tryptophan_synthase_alpha"/>
    <property type="match status" value="1"/>
</dbReference>
<dbReference type="FunFam" id="3.20.20.70:FF:000037">
    <property type="entry name" value="Tryptophan synthase alpha chain"/>
    <property type="match status" value="1"/>
</dbReference>
<dbReference type="Gene3D" id="3.20.20.70">
    <property type="entry name" value="Aldolase class I"/>
    <property type="match status" value="1"/>
</dbReference>
<dbReference type="HAMAP" id="MF_00131">
    <property type="entry name" value="Trp_synth_alpha"/>
    <property type="match status" value="1"/>
</dbReference>
<dbReference type="InterPro" id="IPR013785">
    <property type="entry name" value="Aldolase_TIM"/>
</dbReference>
<dbReference type="InterPro" id="IPR011060">
    <property type="entry name" value="RibuloseP-bd_barrel"/>
</dbReference>
<dbReference type="InterPro" id="IPR018204">
    <property type="entry name" value="Trp_synthase_alpha_AS"/>
</dbReference>
<dbReference type="InterPro" id="IPR002028">
    <property type="entry name" value="Trp_synthase_suA"/>
</dbReference>
<dbReference type="NCBIfam" id="TIGR00262">
    <property type="entry name" value="trpA"/>
    <property type="match status" value="1"/>
</dbReference>
<dbReference type="PANTHER" id="PTHR43406:SF1">
    <property type="entry name" value="TRYPTOPHAN SYNTHASE ALPHA CHAIN, CHLOROPLASTIC"/>
    <property type="match status" value="1"/>
</dbReference>
<dbReference type="PANTHER" id="PTHR43406">
    <property type="entry name" value="TRYPTOPHAN SYNTHASE, ALPHA CHAIN"/>
    <property type="match status" value="1"/>
</dbReference>
<dbReference type="Pfam" id="PF00290">
    <property type="entry name" value="Trp_syntA"/>
    <property type="match status" value="1"/>
</dbReference>
<dbReference type="SUPFAM" id="SSF51366">
    <property type="entry name" value="Ribulose-phoshate binding barrel"/>
    <property type="match status" value="1"/>
</dbReference>
<dbReference type="PROSITE" id="PS00167">
    <property type="entry name" value="TRP_SYNTHASE_ALPHA"/>
    <property type="match status" value="1"/>
</dbReference>
<name>TRPA_DEHMB</name>
<proteinExistence type="inferred from homology"/>
<reference key="1">
    <citation type="submission" date="2007-05" db="EMBL/GenBank/DDBJ databases">
        <title>Complete sequence of Dehalococcoides sp. BAV1.</title>
        <authorList>
            <consortium name="US DOE Joint Genome Institute"/>
            <person name="Copeland A."/>
            <person name="Lucas S."/>
            <person name="Lapidus A."/>
            <person name="Barry K."/>
            <person name="Detter J.C."/>
            <person name="Glavina del Rio T."/>
            <person name="Hammon N."/>
            <person name="Israni S."/>
            <person name="Pitluck S."/>
            <person name="Lowry S."/>
            <person name="Clum A."/>
            <person name="Schmutz J."/>
            <person name="Larimer F."/>
            <person name="Land M."/>
            <person name="Hauser L."/>
            <person name="Kyrpides N."/>
            <person name="Kim E."/>
            <person name="Ritalahti K.M."/>
            <person name="Loeffler F."/>
            <person name="Richardson P."/>
        </authorList>
    </citation>
    <scope>NUCLEOTIDE SEQUENCE [LARGE SCALE GENOMIC DNA]</scope>
    <source>
        <strain>ATCC BAA-2100 / JCM 16839 / KCTC 5957 / BAV1</strain>
    </source>
</reference>
<protein>
    <recommendedName>
        <fullName evidence="1">Tryptophan synthase alpha chain</fullName>
        <ecNumber evidence="1">4.2.1.20</ecNumber>
    </recommendedName>
</protein>
<keyword id="KW-0028">Amino-acid biosynthesis</keyword>
<keyword id="KW-0057">Aromatic amino acid biosynthesis</keyword>
<keyword id="KW-0456">Lyase</keyword>
<keyword id="KW-0822">Tryptophan biosynthesis</keyword>
<comment type="function">
    <text evidence="1">The alpha subunit is responsible for the aldol cleavage of indoleglycerol phosphate to indole and glyceraldehyde 3-phosphate.</text>
</comment>
<comment type="catalytic activity">
    <reaction evidence="1">
        <text>(1S,2R)-1-C-(indol-3-yl)glycerol 3-phosphate + L-serine = D-glyceraldehyde 3-phosphate + L-tryptophan + H2O</text>
        <dbReference type="Rhea" id="RHEA:10532"/>
        <dbReference type="ChEBI" id="CHEBI:15377"/>
        <dbReference type="ChEBI" id="CHEBI:33384"/>
        <dbReference type="ChEBI" id="CHEBI:57912"/>
        <dbReference type="ChEBI" id="CHEBI:58866"/>
        <dbReference type="ChEBI" id="CHEBI:59776"/>
        <dbReference type="EC" id="4.2.1.20"/>
    </reaction>
</comment>
<comment type="pathway">
    <text evidence="1">Amino-acid biosynthesis; L-tryptophan biosynthesis; L-tryptophan from chorismate: step 5/5.</text>
</comment>
<comment type="subunit">
    <text evidence="1">Tetramer of two alpha and two beta chains.</text>
</comment>
<comment type="similarity">
    <text evidence="1">Belongs to the TrpA family.</text>
</comment>
<accession>A5FPL3</accession>
<sequence length="255" mass="27627">MSRISDAFQKRKSLIAYITVGYPDIETTLRLVPLLEENGVDIIELGIPFSDPLADGVTIQNASYQALQNGVTPEVCLSVAALLKEKISIPMVFMGYYNPIYNYGLTKFCQKCATAGVSGFIIPDLPPGEAQDIDFAAREAGLDIIFLLAPTSTDERIKLVAAKSRGFIYLVSHSGVTGATANLPADLSSFVNRVRKTARQPLAVGFGISTPEQAQNIAKFSDGIIVGSRILQLVQTDPSLEKVATFIRQLRQSLD</sequence>
<evidence type="ECO:0000255" key="1">
    <source>
        <dbReference type="HAMAP-Rule" id="MF_00131"/>
    </source>
</evidence>
<organism>
    <name type="scientific">Dehalococcoides mccartyi (strain ATCC BAA-2100 / JCM 16839 / KCTC 5957 / BAV1)</name>
    <dbReference type="NCBI Taxonomy" id="216389"/>
    <lineage>
        <taxon>Bacteria</taxon>
        <taxon>Bacillati</taxon>
        <taxon>Chloroflexota</taxon>
        <taxon>Dehalococcoidia</taxon>
        <taxon>Dehalococcoidales</taxon>
        <taxon>Dehalococcoidaceae</taxon>
        <taxon>Dehalococcoides</taxon>
    </lineage>
</organism>
<feature type="chain" id="PRO_1000076353" description="Tryptophan synthase alpha chain">
    <location>
        <begin position="1"/>
        <end position="255"/>
    </location>
</feature>
<feature type="active site" description="Proton acceptor" evidence="1">
    <location>
        <position position="44"/>
    </location>
</feature>
<feature type="active site" description="Proton acceptor" evidence="1">
    <location>
        <position position="55"/>
    </location>
</feature>